<sequence length="467" mass="52805">MTSQLKRTLTKRYGVLELWEIIVIALFAAFIVILVLSVWLSFRKKSKRSNATTLPVTQSPRFTEEIKEISVDHGSSNNNGTSYQTLDEKFVEDIENGDKFSGSLEKKPLVGSHLPPSTPSTTAPSPLLGLPEVSHIGWGHWFTLRDLQLATNHFSKESIIGDGGYGVVYHGTLTNKTPVAVKKLLNNPGQADKDFRVEVEAIGHVRHKNLVRLLGYCVEGTHRMLVYEYMNNGNLEQWLHGDMIHKGHLTWEARIKVLVGTAKALAYLHEAIEPKVVHRDIKSSNILMDDNFDAKLSDFGLAKLLGADSNYVSTRVMGTFGYVAPEYANSGLLNEKSDVYSYGVVLLEAITGRYPVDYARPKEEVHMVEWLKLMVQQKQFEEVVDKELEIKPTTSELKRALLTALRCVDPDADKRPKMSQVARMLESDEYPVMPREERRRRRNQNAETHRESTDTNKDNDITTDAKI</sequence>
<accession>Q9LRP3</accession>
<dbReference type="EC" id="2.7.11.1"/>
<dbReference type="EMBL" id="AB028620">
    <property type="protein sequence ID" value="BAB02918.1"/>
    <property type="molecule type" value="Genomic_DNA"/>
</dbReference>
<dbReference type="EMBL" id="CP002686">
    <property type="protein sequence ID" value="AEE75951.1"/>
    <property type="molecule type" value="Genomic_DNA"/>
</dbReference>
<dbReference type="EMBL" id="AY065430">
    <property type="protein sequence ID" value="AAL38871.1"/>
    <property type="molecule type" value="mRNA"/>
</dbReference>
<dbReference type="EMBL" id="AY096380">
    <property type="protein sequence ID" value="AAM20021.1"/>
    <property type="molecule type" value="mRNA"/>
</dbReference>
<dbReference type="SMR" id="Q9LRP3"/>
<dbReference type="BioGRID" id="6339">
    <property type="interactions" value="1"/>
</dbReference>
<dbReference type="FunCoup" id="Q9LRP3">
    <property type="interactions" value="317"/>
</dbReference>
<dbReference type="IntAct" id="Q9LRP3">
    <property type="interactions" value="1"/>
</dbReference>
<dbReference type="STRING" id="3702.Q9LRP3"/>
<dbReference type="GlyGen" id="Q9LRP3">
    <property type="glycosylation" value="3 sites"/>
</dbReference>
<dbReference type="iPTMnet" id="Q9LRP3"/>
<dbReference type="PaxDb" id="3702-AT3G17420.1"/>
<dbReference type="ProteomicsDB" id="234628"/>
<dbReference type="EnsemblPlants" id="AT3G17420.1">
    <property type="protein sequence ID" value="AT3G17420.1"/>
    <property type="gene ID" value="AT3G17420"/>
</dbReference>
<dbReference type="Gramene" id="AT3G17420.1">
    <property type="protein sequence ID" value="AT3G17420.1"/>
    <property type="gene ID" value="AT3G17420"/>
</dbReference>
<dbReference type="KEGG" id="ath:AT3G17420"/>
<dbReference type="Araport" id="AT3G17420"/>
<dbReference type="TAIR" id="AT3G17420">
    <property type="gene designation" value="GPK1"/>
</dbReference>
<dbReference type="eggNOG" id="KOG1187">
    <property type="taxonomic scope" value="Eukaryota"/>
</dbReference>
<dbReference type="HOGENOM" id="CLU_000288_4_1_1"/>
<dbReference type="InParanoid" id="Q9LRP3"/>
<dbReference type="OMA" id="VNQIRHP"/>
<dbReference type="OrthoDB" id="4062651at2759"/>
<dbReference type="PhylomeDB" id="Q9LRP3"/>
<dbReference type="PRO" id="PR:Q9LRP3"/>
<dbReference type="Proteomes" id="UP000006548">
    <property type="component" value="Chromosome 3"/>
</dbReference>
<dbReference type="ExpressionAtlas" id="Q9LRP3">
    <property type="expression patterns" value="baseline and differential"/>
</dbReference>
<dbReference type="GO" id="GO:0009514">
    <property type="term" value="C:glyoxysome"/>
    <property type="evidence" value="ECO:0000314"/>
    <property type="project" value="TAIR"/>
</dbReference>
<dbReference type="GO" id="GO:0005886">
    <property type="term" value="C:plasma membrane"/>
    <property type="evidence" value="ECO:0007005"/>
    <property type="project" value="TAIR"/>
</dbReference>
<dbReference type="GO" id="GO:0009506">
    <property type="term" value="C:plasmodesma"/>
    <property type="evidence" value="ECO:0007005"/>
    <property type="project" value="TAIR"/>
</dbReference>
<dbReference type="GO" id="GO:0005524">
    <property type="term" value="F:ATP binding"/>
    <property type="evidence" value="ECO:0007669"/>
    <property type="project" value="UniProtKB-KW"/>
</dbReference>
<dbReference type="GO" id="GO:0106310">
    <property type="term" value="F:protein serine kinase activity"/>
    <property type="evidence" value="ECO:0007669"/>
    <property type="project" value="RHEA"/>
</dbReference>
<dbReference type="GO" id="GO:0004674">
    <property type="term" value="F:protein serine/threonine kinase activity"/>
    <property type="evidence" value="ECO:0007669"/>
    <property type="project" value="UniProtKB-KW"/>
</dbReference>
<dbReference type="CDD" id="cd14066">
    <property type="entry name" value="STKc_IRAK"/>
    <property type="match status" value="1"/>
</dbReference>
<dbReference type="FunFam" id="3.30.200.20:FF:000083">
    <property type="entry name" value="Putative receptor-like protein kinase"/>
    <property type="match status" value="1"/>
</dbReference>
<dbReference type="FunFam" id="1.10.510.10:FF:000035">
    <property type="entry name" value="Putative receptor-like serine/threonine-protein kinase"/>
    <property type="match status" value="1"/>
</dbReference>
<dbReference type="Gene3D" id="3.30.200.20">
    <property type="entry name" value="Phosphorylase Kinase, domain 1"/>
    <property type="match status" value="1"/>
</dbReference>
<dbReference type="Gene3D" id="1.10.510.10">
    <property type="entry name" value="Transferase(Phosphotransferase) domain 1"/>
    <property type="match status" value="1"/>
</dbReference>
<dbReference type="InterPro" id="IPR011009">
    <property type="entry name" value="Kinase-like_dom_sf"/>
</dbReference>
<dbReference type="InterPro" id="IPR000719">
    <property type="entry name" value="Prot_kinase_dom"/>
</dbReference>
<dbReference type="InterPro" id="IPR017441">
    <property type="entry name" value="Protein_kinase_ATP_BS"/>
</dbReference>
<dbReference type="InterPro" id="IPR052232">
    <property type="entry name" value="RLK_Ser/Thr-Kinase"/>
</dbReference>
<dbReference type="InterPro" id="IPR008271">
    <property type="entry name" value="Ser/Thr_kinase_AS"/>
</dbReference>
<dbReference type="PANTHER" id="PTHR47984">
    <property type="entry name" value="OS01G0323000 PROTEIN"/>
    <property type="match status" value="1"/>
</dbReference>
<dbReference type="PANTHER" id="PTHR47984:SF18">
    <property type="entry name" value="PROTEIN KINASE DOMAIN-CONTAINING PROTEIN"/>
    <property type="match status" value="1"/>
</dbReference>
<dbReference type="Pfam" id="PF00069">
    <property type="entry name" value="Pkinase"/>
    <property type="match status" value="1"/>
</dbReference>
<dbReference type="SMART" id="SM00220">
    <property type="entry name" value="S_TKc"/>
    <property type="match status" value="1"/>
</dbReference>
<dbReference type="SUPFAM" id="SSF56112">
    <property type="entry name" value="Protein kinase-like (PK-like)"/>
    <property type="match status" value="1"/>
</dbReference>
<dbReference type="PROSITE" id="PS00107">
    <property type="entry name" value="PROTEIN_KINASE_ATP"/>
    <property type="match status" value="1"/>
</dbReference>
<dbReference type="PROSITE" id="PS50011">
    <property type="entry name" value="PROTEIN_KINASE_DOM"/>
    <property type="match status" value="1"/>
</dbReference>
<dbReference type="PROSITE" id="PS00108">
    <property type="entry name" value="PROTEIN_KINASE_ST"/>
    <property type="match status" value="1"/>
</dbReference>
<proteinExistence type="evidence at protein level"/>
<evidence type="ECO:0000250" key="1">
    <source>
        <dbReference type="UniProtKB" id="O48814"/>
    </source>
</evidence>
<evidence type="ECO:0000255" key="2"/>
<evidence type="ECO:0000255" key="3">
    <source>
        <dbReference type="PROSITE-ProRule" id="PRU00159"/>
    </source>
</evidence>
<evidence type="ECO:0000255" key="4">
    <source>
        <dbReference type="PROSITE-ProRule" id="PRU10027"/>
    </source>
</evidence>
<evidence type="ECO:0000256" key="5">
    <source>
        <dbReference type="SAM" id="MobiDB-lite"/>
    </source>
</evidence>
<evidence type="ECO:0000269" key="6">
    <source>
    </source>
</evidence>
<evidence type="ECO:0000269" key="7">
    <source>
    </source>
</evidence>
<evidence type="ECO:0007744" key="8">
    <source>
    </source>
</evidence>
<evidence type="ECO:0007744" key="9">
    <source>
    </source>
</evidence>
<protein>
    <recommendedName>
        <fullName>Probable receptor-like protein kinase At3g17420</fullName>
        <ecNumber>2.7.11.1</ecNumber>
    </recommendedName>
</protein>
<gene>
    <name type="ordered locus">At3g17420</name>
    <name type="ORF">MTO12.1</name>
</gene>
<keyword id="KW-0067">ATP-binding</keyword>
<keyword id="KW-1003">Cell membrane</keyword>
<keyword id="KW-0325">Glycoprotein</keyword>
<keyword id="KW-0418">Kinase</keyword>
<keyword id="KW-0472">Membrane</keyword>
<keyword id="KW-0547">Nucleotide-binding</keyword>
<keyword id="KW-0597">Phosphoprotein</keyword>
<keyword id="KW-1185">Reference proteome</keyword>
<keyword id="KW-0723">Serine/threonine-protein kinase</keyword>
<keyword id="KW-0732">Signal</keyword>
<keyword id="KW-0808">Transferase</keyword>
<keyword id="KW-0812">Transmembrane</keyword>
<keyword id="KW-1133">Transmembrane helix</keyword>
<name>Y3174_ARATH</name>
<organism>
    <name type="scientific">Arabidopsis thaliana</name>
    <name type="common">Mouse-ear cress</name>
    <dbReference type="NCBI Taxonomy" id="3702"/>
    <lineage>
        <taxon>Eukaryota</taxon>
        <taxon>Viridiplantae</taxon>
        <taxon>Streptophyta</taxon>
        <taxon>Embryophyta</taxon>
        <taxon>Tracheophyta</taxon>
        <taxon>Spermatophyta</taxon>
        <taxon>Magnoliopsida</taxon>
        <taxon>eudicotyledons</taxon>
        <taxon>Gunneridae</taxon>
        <taxon>Pentapetalae</taxon>
        <taxon>rosids</taxon>
        <taxon>malvids</taxon>
        <taxon>Brassicales</taxon>
        <taxon>Brassicaceae</taxon>
        <taxon>Camelineae</taxon>
        <taxon>Arabidopsis</taxon>
    </lineage>
</organism>
<feature type="signal peptide" evidence="2">
    <location>
        <begin position="1"/>
        <end position="35"/>
    </location>
</feature>
<feature type="chain" id="PRO_0000401344" description="Probable receptor-like protein kinase At3g17420">
    <location>
        <begin position="36"/>
        <end position="467"/>
    </location>
</feature>
<feature type="topological domain" description="Extracellular" evidence="2">
    <location>
        <begin position="36"/>
        <end position="123"/>
    </location>
</feature>
<feature type="transmembrane region" description="Helical" evidence="2">
    <location>
        <begin position="124"/>
        <end position="144"/>
    </location>
</feature>
<feature type="topological domain" description="Cytoplasmic" evidence="2">
    <location>
        <begin position="145"/>
        <end position="467"/>
    </location>
</feature>
<feature type="domain" description="Protein kinase" evidence="3">
    <location>
        <begin position="154"/>
        <end position="433"/>
    </location>
</feature>
<feature type="region of interest" description="Disordered" evidence="5">
    <location>
        <begin position="102"/>
        <end position="126"/>
    </location>
</feature>
<feature type="region of interest" description="Disordered" evidence="5">
    <location>
        <begin position="413"/>
        <end position="467"/>
    </location>
</feature>
<feature type="compositionally biased region" description="Basic and acidic residues" evidence="5">
    <location>
        <begin position="447"/>
        <end position="467"/>
    </location>
</feature>
<feature type="active site" description="Proton acceptor" evidence="3 4">
    <location>
        <position position="280"/>
    </location>
</feature>
<feature type="binding site" evidence="3">
    <location>
        <begin position="160"/>
        <end position="168"/>
    </location>
    <ligand>
        <name>ATP</name>
        <dbReference type="ChEBI" id="CHEBI:30616"/>
    </ligand>
</feature>
<feature type="binding site" evidence="3">
    <location>
        <position position="182"/>
    </location>
    <ligand>
        <name>ATP</name>
        <dbReference type="ChEBI" id="CHEBI:30616"/>
    </ligand>
</feature>
<feature type="modified residue" description="Phosphoserine" evidence="8 9">
    <location>
        <position position="70"/>
    </location>
</feature>
<feature type="modified residue" description="Phosphotyrosine" evidence="1">
    <location>
        <position position="227"/>
    </location>
</feature>
<feature type="modified residue" description="Phosphoserine" evidence="1">
    <location>
        <position position="284"/>
    </location>
</feature>
<feature type="modified residue" description="Phosphoserine" evidence="1">
    <location>
        <position position="313"/>
    </location>
</feature>
<feature type="modified residue" description="Phosphothreonine" evidence="1">
    <location>
        <position position="314"/>
    </location>
</feature>
<feature type="modified residue" description="Phosphothreonine" evidence="1">
    <location>
        <position position="319"/>
    </location>
</feature>
<feature type="modified residue" description="Phosphotyrosine" evidence="1">
    <location>
        <position position="327"/>
    </location>
</feature>
<feature type="glycosylation site" description="N-linked (GlcNAc...) asparagine" evidence="2">
    <location>
        <position position="50"/>
    </location>
</feature>
<feature type="glycosylation site" description="N-linked (GlcNAc...) asparagine" evidence="2">
    <location>
        <position position="79"/>
    </location>
</feature>
<reference key="1">
    <citation type="journal article" date="2000" name="DNA Res.">
        <title>Structural analysis of Arabidopsis thaliana chromosome 3. I. Sequence features of the regions of 4,504,864 bp covered by sixty P1 and TAC clones.</title>
        <authorList>
            <person name="Sato S."/>
            <person name="Nakamura Y."/>
            <person name="Kaneko T."/>
            <person name="Katoh T."/>
            <person name="Asamizu E."/>
            <person name="Tabata S."/>
        </authorList>
    </citation>
    <scope>NUCLEOTIDE SEQUENCE [LARGE SCALE GENOMIC DNA]</scope>
    <source>
        <strain>cv. Columbia</strain>
    </source>
</reference>
<reference key="2">
    <citation type="journal article" date="2017" name="Plant J.">
        <title>Araport11: a complete reannotation of the Arabidopsis thaliana reference genome.</title>
        <authorList>
            <person name="Cheng C.Y."/>
            <person name="Krishnakumar V."/>
            <person name="Chan A.P."/>
            <person name="Thibaud-Nissen F."/>
            <person name="Schobel S."/>
            <person name="Town C.D."/>
        </authorList>
    </citation>
    <scope>GENOME REANNOTATION</scope>
    <source>
        <strain>cv. Columbia</strain>
    </source>
</reference>
<reference key="3">
    <citation type="journal article" date="2003" name="Science">
        <title>Empirical analysis of transcriptional activity in the Arabidopsis genome.</title>
        <authorList>
            <person name="Yamada K."/>
            <person name="Lim J."/>
            <person name="Dale J.M."/>
            <person name="Chen H."/>
            <person name="Shinn P."/>
            <person name="Palm C.J."/>
            <person name="Southwick A.M."/>
            <person name="Wu H.C."/>
            <person name="Kim C.J."/>
            <person name="Nguyen M."/>
            <person name="Pham P.K."/>
            <person name="Cheuk R.F."/>
            <person name="Karlin-Newmann G."/>
            <person name="Liu S.X."/>
            <person name="Lam B."/>
            <person name="Sakano H."/>
            <person name="Wu T."/>
            <person name="Yu G."/>
            <person name="Miranda M."/>
            <person name="Quach H.L."/>
            <person name="Tripp M."/>
            <person name="Chang C.H."/>
            <person name="Lee J.M."/>
            <person name="Toriumi M.J."/>
            <person name="Chan M.M."/>
            <person name="Tang C.C."/>
            <person name="Onodera C.S."/>
            <person name="Deng J.M."/>
            <person name="Akiyama K."/>
            <person name="Ansari Y."/>
            <person name="Arakawa T."/>
            <person name="Banh J."/>
            <person name="Banno F."/>
            <person name="Bowser L."/>
            <person name="Brooks S.Y."/>
            <person name="Carninci P."/>
            <person name="Chao Q."/>
            <person name="Choy N."/>
            <person name="Enju A."/>
            <person name="Goldsmith A.D."/>
            <person name="Gurjal M."/>
            <person name="Hansen N.F."/>
            <person name="Hayashizaki Y."/>
            <person name="Johnson-Hopson C."/>
            <person name="Hsuan V.W."/>
            <person name="Iida K."/>
            <person name="Karnes M."/>
            <person name="Khan S."/>
            <person name="Koesema E."/>
            <person name="Ishida J."/>
            <person name="Jiang P.X."/>
            <person name="Jones T."/>
            <person name="Kawai J."/>
            <person name="Kamiya A."/>
            <person name="Meyers C."/>
            <person name="Nakajima M."/>
            <person name="Narusaka M."/>
            <person name="Seki M."/>
            <person name="Sakurai T."/>
            <person name="Satou M."/>
            <person name="Tamse R."/>
            <person name="Vaysberg M."/>
            <person name="Wallender E.K."/>
            <person name="Wong C."/>
            <person name="Yamamura Y."/>
            <person name="Yuan S."/>
            <person name="Shinozaki K."/>
            <person name="Davis R.W."/>
            <person name="Theologis A."/>
            <person name="Ecker J.R."/>
        </authorList>
    </citation>
    <scope>NUCLEOTIDE SEQUENCE [LARGE SCALE MRNA]</scope>
    <source>
        <strain>cv. Columbia</strain>
    </source>
</reference>
<reference key="4">
    <citation type="journal article" date="2003" name="Mol. Cell. Proteomics">
        <title>Large-scale analysis of in vivo phosphorylated membrane proteins by immobilized metal ion affinity chromatography and mass spectrometry.</title>
        <authorList>
            <person name="Nuehse T.S."/>
            <person name="Stensballe A."/>
            <person name="Jensen O.N."/>
            <person name="Peck S.C."/>
        </authorList>
    </citation>
    <scope>SUBCELLULAR LOCATION</scope>
    <scope>PHOSPHORYLATION [LARGE SCALE ANALYSIS] AT SER-70</scope>
    <scope>IDENTIFICATION BY MASS SPECTROMETRY [LARGE SCALE ANALYSIS]</scope>
    <source>
        <strain>cv. La-0</strain>
    </source>
</reference>
<reference key="5">
    <citation type="journal article" date="2004" name="Plant Cell">
        <title>Phosphoproteomics of the Arabidopsis plasma membrane and a new phosphorylation site database.</title>
        <authorList>
            <person name="Nuehse T.S."/>
            <person name="Stensballe A."/>
            <person name="Jensen O.N."/>
            <person name="Peck S.C."/>
        </authorList>
    </citation>
    <scope>SUBCELLULAR LOCATION</scope>
    <scope>PHOSPHORYLATION [LARGE SCALE ANALYSIS] AT SER-70</scope>
    <scope>IDENTIFICATION BY MASS SPECTROMETRY [LARGE SCALE ANALYSIS]</scope>
</reference>
<comment type="catalytic activity">
    <reaction>
        <text>L-seryl-[protein] + ATP = O-phospho-L-seryl-[protein] + ADP + H(+)</text>
        <dbReference type="Rhea" id="RHEA:17989"/>
        <dbReference type="Rhea" id="RHEA-COMP:9863"/>
        <dbReference type="Rhea" id="RHEA-COMP:11604"/>
        <dbReference type="ChEBI" id="CHEBI:15378"/>
        <dbReference type="ChEBI" id="CHEBI:29999"/>
        <dbReference type="ChEBI" id="CHEBI:30616"/>
        <dbReference type="ChEBI" id="CHEBI:83421"/>
        <dbReference type="ChEBI" id="CHEBI:456216"/>
        <dbReference type="EC" id="2.7.11.1"/>
    </reaction>
</comment>
<comment type="catalytic activity">
    <reaction>
        <text>L-threonyl-[protein] + ATP = O-phospho-L-threonyl-[protein] + ADP + H(+)</text>
        <dbReference type="Rhea" id="RHEA:46608"/>
        <dbReference type="Rhea" id="RHEA-COMP:11060"/>
        <dbReference type="Rhea" id="RHEA-COMP:11605"/>
        <dbReference type="ChEBI" id="CHEBI:15378"/>
        <dbReference type="ChEBI" id="CHEBI:30013"/>
        <dbReference type="ChEBI" id="CHEBI:30616"/>
        <dbReference type="ChEBI" id="CHEBI:61977"/>
        <dbReference type="ChEBI" id="CHEBI:456216"/>
        <dbReference type="EC" id="2.7.11.1"/>
    </reaction>
</comment>
<comment type="subcellular location">
    <subcellularLocation>
        <location evidence="6 7">Cell membrane</location>
        <topology evidence="6 7">Single-pass type I membrane protein</topology>
    </subcellularLocation>
</comment>
<comment type="similarity">
    <text evidence="3">Belongs to the protein kinase superfamily. Ser/Thr protein kinase family.</text>
</comment>